<name>YLXG_ALIFS</name>
<organism>
    <name type="scientific">Aliivibrio fischeri</name>
    <name type="common">Vibrio fischeri</name>
    <dbReference type="NCBI Taxonomy" id="668"/>
    <lineage>
        <taxon>Bacteria</taxon>
        <taxon>Pseudomonadati</taxon>
        <taxon>Pseudomonadota</taxon>
        <taxon>Gammaproteobacteria</taxon>
        <taxon>Vibrionales</taxon>
        <taxon>Vibrionaceae</taxon>
        <taxon>Aliivibrio</taxon>
    </lineage>
</organism>
<proteinExistence type="inferred from homology"/>
<feature type="chain" id="PRO_0000171711" description="Uncharacterized deaminase in luxG 3'region">
    <location>
        <begin position="1"/>
        <end position="147"/>
    </location>
</feature>
<feature type="domain" description="CMP/dCMP-type deaminase" evidence="2">
    <location>
        <begin position="4"/>
        <end position="120"/>
    </location>
</feature>
<feature type="active site" description="Proton donor" evidence="1">
    <location>
        <position position="69"/>
    </location>
</feature>
<feature type="binding site" evidence="1">
    <location>
        <position position="67"/>
    </location>
    <ligand>
        <name>Zn(2+)</name>
        <dbReference type="ChEBI" id="CHEBI:29105"/>
        <note>catalytic</note>
    </ligand>
</feature>
<feature type="binding site" evidence="1">
    <location>
        <position position="92"/>
    </location>
    <ligand>
        <name>Zn(2+)</name>
        <dbReference type="ChEBI" id="CHEBI:29105"/>
        <note>catalytic</note>
    </ligand>
</feature>
<feature type="binding site" evidence="1">
    <location>
        <position position="95"/>
    </location>
    <ligand>
        <name>Zn(2+)</name>
        <dbReference type="ChEBI" id="CHEBI:29105"/>
        <note>catalytic</note>
    </ligand>
</feature>
<keyword id="KW-0378">Hydrolase</keyword>
<keyword id="KW-0479">Metal-binding</keyword>
<keyword id="KW-0862">Zinc</keyword>
<accession>P33968</accession>
<comment type="cofactor">
    <cofactor evidence="1">
        <name>Zn(2+)</name>
        <dbReference type="ChEBI" id="CHEBI:29105"/>
    </cofactor>
</comment>
<comment type="similarity">
    <text evidence="3">Belongs to the cytidine and deoxycytidylate deaminase family.</text>
</comment>
<protein>
    <recommendedName>
        <fullName>Uncharacterized deaminase in luxG 3'region</fullName>
        <ecNumber>3.5.-.-</ecNumber>
    </recommendedName>
</protein>
<dbReference type="EC" id="3.5.-.-"/>
<dbReference type="EMBL" id="X70289">
    <property type="protein sequence ID" value="CAA49769.1"/>
    <property type="molecule type" value="Genomic_DNA"/>
</dbReference>
<dbReference type="SMR" id="P33968"/>
<dbReference type="GO" id="GO:0005737">
    <property type="term" value="C:cytoplasm"/>
    <property type="evidence" value="ECO:0007669"/>
    <property type="project" value="TreeGrafter"/>
</dbReference>
<dbReference type="GO" id="GO:0004132">
    <property type="term" value="F:dCMP deaminase activity"/>
    <property type="evidence" value="ECO:0007669"/>
    <property type="project" value="InterPro"/>
</dbReference>
<dbReference type="GO" id="GO:0008270">
    <property type="term" value="F:zinc ion binding"/>
    <property type="evidence" value="ECO:0007669"/>
    <property type="project" value="InterPro"/>
</dbReference>
<dbReference type="GO" id="GO:0009972">
    <property type="term" value="P:cytidine deamination"/>
    <property type="evidence" value="ECO:0007669"/>
    <property type="project" value="TreeGrafter"/>
</dbReference>
<dbReference type="GO" id="GO:0006220">
    <property type="term" value="P:pyrimidine nucleotide metabolic process"/>
    <property type="evidence" value="ECO:0007669"/>
    <property type="project" value="InterPro"/>
</dbReference>
<dbReference type="CDD" id="cd01286">
    <property type="entry name" value="deoxycytidylate_deaminase"/>
    <property type="match status" value="1"/>
</dbReference>
<dbReference type="Gene3D" id="3.40.140.10">
    <property type="entry name" value="Cytidine Deaminase, domain 2"/>
    <property type="match status" value="1"/>
</dbReference>
<dbReference type="InterPro" id="IPR016192">
    <property type="entry name" value="APOBEC/CMP_deaminase_Zn-bd"/>
</dbReference>
<dbReference type="InterPro" id="IPR002125">
    <property type="entry name" value="CMP_dCMP_dom"/>
</dbReference>
<dbReference type="InterPro" id="IPR016193">
    <property type="entry name" value="Cytidine_deaminase-like"/>
</dbReference>
<dbReference type="InterPro" id="IPR016473">
    <property type="entry name" value="dCMP_deaminase"/>
</dbReference>
<dbReference type="InterPro" id="IPR015517">
    <property type="entry name" value="dCMP_deaminase-rel"/>
</dbReference>
<dbReference type="InterPro" id="IPR035105">
    <property type="entry name" value="Deoxycytidylate_deaminase_dom"/>
</dbReference>
<dbReference type="PANTHER" id="PTHR11086:SF18">
    <property type="entry name" value="DEOXYCYTIDYLATE DEAMINASE"/>
    <property type="match status" value="1"/>
</dbReference>
<dbReference type="PANTHER" id="PTHR11086">
    <property type="entry name" value="DEOXYCYTIDYLATE DEAMINASE-RELATED"/>
    <property type="match status" value="1"/>
</dbReference>
<dbReference type="Pfam" id="PF00383">
    <property type="entry name" value="dCMP_cyt_deam_1"/>
    <property type="match status" value="1"/>
</dbReference>
<dbReference type="PIRSF" id="PIRSF006019">
    <property type="entry name" value="dCMP_deaminase"/>
    <property type="match status" value="1"/>
</dbReference>
<dbReference type="SUPFAM" id="SSF53927">
    <property type="entry name" value="Cytidine deaminase-like"/>
    <property type="match status" value="1"/>
</dbReference>
<dbReference type="PROSITE" id="PS00903">
    <property type="entry name" value="CYT_DCMP_DEAMINASES_1"/>
    <property type="match status" value="1"/>
</dbReference>
<dbReference type="PROSITE" id="PS51747">
    <property type="entry name" value="CYT_DCMP_DEAMINASES_2"/>
    <property type="match status" value="1"/>
</dbReference>
<reference key="1">
    <citation type="journal article" date="1993" name="Biochim. Biophys. Acta">
        <title>The gene convergent to luxG in Vibrio fischeri codes for a protein related in sequence to RibG and deoxycytidylate deaminase.</title>
        <authorList>
            <person name="Lee C.Y."/>
            <person name="Szittner R.B."/>
            <person name="Miyamoto C.M."/>
            <person name="Meighen E.A."/>
        </authorList>
    </citation>
    <scope>NUCLEOTIDE SEQUENCE [GENOMIC DNA]</scope>
    <source>
        <strain>ATCC 7744 / DSM 507 / NCIMB 1281 / 398</strain>
    </source>
</reference>
<evidence type="ECO:0000250" key="1"/>
<evidence type="ECO:0000255" key="2">
    <source>
        <dbReference type="PROSITE-ProRule" id="PRU01083"/>
    </source>
</evidence>
<evidence type="ECO:0000305" key="3"/>
<sequence length="147" mass="16622">MISKWAKRFFQMAELVGSWSKDPSTQVGAVITKHNRIVSVGFNGYPHGVSDSADTDEREIKYLKTLHAEENAILFAKRDLEGCDIWVTHFPCPNCAAKIIQTGISKVYCPEQTEDFLSRWGEKIQVSQDMFSQAGVEVTWLPLDILK</sequence>